<evidence type="ECO:0000269" key="1">
    <source>
    </source>
</evidence>
<evidence type="ECO:0000269" key="2">
    <source>
    </source>
</evidence>
<evidence type="ECO:0007829" key="3">
    <source>
        <dbReference type="PDB" id="3WX4"/>
    </source>
</evidence>
<organism>
    <name type="scientific">Enterobacteria phage T4</name>
    <name type="common">Bacteriophage T4</name>
    <dbReference type="NCBI Taxonomy" id="10665"/>
    <lineage>
        <taxon>Viruses</taxon>
        <taxon>Duplodnaviria</taxon>
        <taxon>Heunggongvirae</taxon>
        <taxon>Uroviricota</taxon>
        <taxon>Caudoviricetes</taxon>
        <taxon>Straboviridae</taxon>
        <taxon>Tevenvirinae</taxon>
        <taxon>Tequatrovirus</taxon>
    </lineage>
</organism>
<accession>P39510</accession>
<dbReference type="EMBL" id="L37801">
    <property type="protein sequence ID" value="AAA86440.1"/>
    <property type="molecule type" value="Genomic_DNA"/>
</dbReference>
<dbReference type="EMBL" id="AF158101">
    <property type="protein sequence ID" value="AAD42538.1"/>
    <property type="molecule type" value="Genomic_DNA"/>
</dbReference>
<dbReference type="RefSeq" id="NP_049868.1">
    <property type="nucleotide sequence ID" value="NC_000866.4"/>
</dbReference>
<dbReference type="PDB" id="3WX4">
    <property type="method" value="X-ray"/>
    <property type="resolution" value="1.90 A"/>
    <property type="chains" value="A=1-92"/>
</dbReference>
<dbReference type="PDBsum" id="3WX4"/>
<dbReference type="SMR" id="P39510"/>
<dbReference type="GeneID" id="1258794"/>
<dbReference type="KEGG" id="vg:1258794"/>
<dbReference type="OrthoDB" id="20782at10239"/>
<dbReference type="Proteomes" id="UP000009087">
    <property type="component" value="Segment"/>
</dbReference>
<dbReference type="GO" id="GO:0004519">
    <property type="term" value="F:endonuclease activity"/>
    <property type="evidence" value="ECO:0007669"/>
    <property type="project" value="UniProtKB-KW"/>
</dbReference>
<dbReference type="GO" id="GO:0099018">
    <property type="term" value="P:symbiont-mediated evasion of host restriction-modification system"/>
    <property type="evidence" value="ECO:0007669"/>
    <property type="project" value="UniProtKB-KW"/>
</dbReference>
<dbReference type="GO" id="GO:0052170">
    <property type="term" value="P:symbiont-mediated suppression of host innate immune response"/>
    <property type="evidence" value="ECO:0007669"/>
    <property type="project" value="UniProtKB-KW"/>
</dbReference>
<dbReference type="Gene3D" id="3.30.70.2770">
    <property type="match status" value="1"/>
</dbReference>
<dbReference type="InterPro" id="IPR053757">
    <property type="entry name" value="Anti-Restrict_Endo_sf"/>
</dbReference>
<dbReference type="InterPro" id="IPR054385">
    <property type="entry name" value="Arn"/>
</dbReference>
<dbReference type="Pfam" id="PF22134">
    <property type="entry name" value="DM_Arn"/>
    <property type="match status" value="1"/>
</dbReference>
<name>ARN_BPT4</name>
<comment type="function">
    <text evidence="1 2">Pays a role in the inhibition of the host restriction-modification system. Strongly inhibits the host mcrA endonuclease that cleaves 5-methyl and 5-hydroxymethylcytosines at the specific DNA sequence C(me)CGG.</text>
</comment>
<proteinExistence type="evidence at protein level"/>
<feature type="chain" id="PRO_0000164918" description="Anti-restriction endonuclease">
    <location>
        <begin position="1"/>
        <end position="92"/>
    </location>
</feature>
<feature type="strand" evidence="3">
    <location>
        <begin position="11"/>
        <end position="14"/>
    </location>
</feature>
<feature type="helix" evidence="3">
    <location>
        <begin position="16"/>
        <end position="24"/>
    </location>
</feature>
<feature type="helix" evidence="3">
    <location>
        <begin position="26"/>
        <end position="43"/>
    </location>
</feature>
<feature type="strand" evidence="3">
    <location>
        <begin position="45"/>
        <end position="51"/>
    </location>
</feature>
<feature type="helix" evidence="3">
    <location>
        <begin position="55"/>
        <end position="57"/>
    </location>
</feature>
<feature type="strand" evidence="3">
    <location>
        <begin position="60"/>
        <end position="65"/>
    </location>
</feature>
<feature type="helix" evidence="3">
    <location>
        <begin position="71"/>
        <end position="84"/>
    </location>
</feature>
<feature type="helix" evidence="3">
    <location>
        <begin position="88"/>
        <end position="91"/>
    </location>
</feature>
<reference key="1">
    <citation type="journal article" date="1997" name="Mol. Cells">
        <title>Nucleotide sequence and revised map location of the arn gene from bacteriophage T4.</title>
        <authorList>
            <person name="Kim B.C."/>
            <person name="Kim K."/>
            <person name="Park E.H."/>
            <person name="Lim C.J."/>
        </authorList>
    </citation>
    <scope>NUCLEOTIDE SEQUENCE [GENOMIC DNA]</scope>
    <source>
        <strain>T4ALC10</strain>
    </source>
</reference>
<reference key="2">
    <citation type="journal article" date="2003" name="Microbiol. Mol. Biol. Rev.">
        <title>Bacteriophage T4 genome.</title>
        <authorList>
            <person name="Miller E.S."/>
            <person name="Kutter E."/>
            <person name="Mosig G."/>
            <person name="Arisaka F."/>
            <person name="Kunisawa T."/>
            <person name="Ruger W."/>
        </authorList>
    </citation>
    <scope>NUCLEOTIDE SEQUENCE [LARGE SCALE GENOMIC DNA]</scope>
</reference>
<reference key="3">
    <citation type="journal article" date="1976" name="Nature">
        <title>Phage-coded protein prevents restriction of unmodified progeny T4 DNA.</title>
        <authorList>
            <person name="Dharmalingam K."/>
            <person name="Goldberg E.B."/>
        </authorList>
    </citation>
    <scope>FUNCTION</scope>
</reference>
<reference key="4">
    <citation type="journal article" date="1979" name="Virology">
        <title>Restriction in vivo. IV. Effect of restriction of parental DNA on the expression of restriction alleviation systems in phage T4.</title>
        <authorList>
            <person name="Dharmalingam K."/>
            <person name="Goldberg E.B."/>
        </authorList>
    </citation>
    <scope>FUNCTION</scope>
</reference>
<keyword id="KW-0002">3D-structure</keyword>
<keyword id="KW-0255">Endonuclease</keyword>
<keyword id="KW-0945">Host-virus interaction</keyword>
<keyword id="KW-0378">Hydrolase</keyword>
<keyword id="KW-1090">Inhibition of host innate immune response by virus</keyword>
<keyword id="KW-0540">Nuclease</keyword>
<keyword id="KW-1185">Reference proteome</keyword>
<keyword id="KW-1258">Restriction-modification system evasion by virus</keyword>
<keyword id="KW-0899">Viral immunoevasion</keyword>
<sequence>MIIDSQSVVQYTFKIDILEKLYKFLPNLYHSIVNELVEELHLENNDFLIGTYKDLSKAGYFYVIPAPGKNIDDVLKTIMIYVHDYEIEDYFE</sequence>
<gene>
    <name type="primary">arn</name>
    <name type="synonym">asiA.1</name>
    <name type="synonym">motA.-6</name>
</gene>
<protein>
    <recommendedName>
        <fullName>Anti-restriction endonuclease</fullName>
    </recommendedName>
    <alternativeName>
        <fullName>Anti-rgl nuclease</fullName>
    </alternativeName>
</protein>
<organismHost>
    <name type="scientific">Escherichia coli</name>
    <dbReference type="NCBI Taxonomy" id="562"/>
</organismHost>